<organism>
    <name type="scientific">Eulemur fulvus fulvus</name>
    <name type="common">Brown lemur</name>
    <dbReference type="NCBI Taxonomy" id="40322"/>
    <lineage>
        <taxon>Eukaryota</taxon>
        <taxon>Metazoa</taxon>
        <taxon>Chordata</taxon>
        <taxon>Craniata</taxon>
        <taxon>Vertebrata</taxon>
        <taxon>Euteleostomi</taxon>
        <taxon>Mammalia</taxon>
        <taxon>Eutheria</taxon>
        <taxon>Euarchontoglires</taxon>
        <taxon>Primates</taxon>
        <taxon>Strepsirrhini</taxon>
        <taxon>Lemuriformes</taxon>
        <taxon>Lemuridae</taxon>
        <taxon>Eulemur</taxon>
    </lineage>
</organism>
<name>MSHR_EULFU</name>
<proteinExistence type="inferred from homology"/>
<feature type="chain" id="PRO_0000069811" description="Melanocyte-stimulating hormone receptor">
    <location>
        <begin position="1"/>
        <end position="317"/>
    </location>
</feature>
<feature type="topological domain" description="Extracellular" evidence="2">
    <location>
        <begin position="1"/>
        <end position="37"/>
    </location>
</feature>
<feature type="transmembrane region" description="Helical; Name=1" evidence="2">
    <location>
        <begin position="38"/>
        <end position="63"/>
    </location>
</feature>
<feature type="topological domain" description="Cytoplasmic" evidence="2">
    <location>
        <begin position="64"/>
        <end position="72"/>
    </location>
</feature>
<feature type="transmembrane region" description="Helical; Name=2" evidence="2">
    <location>
        <begin position="73"/>
        <end position="93"/>
    </location>
</feature>
<feature type="topological domain" description="Extracellular" evidence="2">
    <location>
        <begin position="94"/>
        <end position="118"/>
    </location>
</feature>
<feature type="transmembrane region" description="Helical; Name=3" evidence="2">
    <location>
        <begin position="119"/>
        <end position="140"/>
    </location>
</feature>
<feature type="topological domain" description="Cytoplasmic" evidence="2">
    <location>
        <begin position="141"/>
        <end position="163"/>
    </location>
</feature>
<feature type="transmembrane region" description="Helical; Name=4" evidence="2">
    <location>
        <begin position="164"/>
        <end position="183"/>
    </location>
</feature>
<feature type="topological domain" description="Extracellular" evidence="2">
    <location>
        <begin position="184"/>
        <end position="191"/>
    </location>
</feature>
<feature type="transmembrane region" description="Helical; Name=5" evidence="2">
    <location>
        <begin position="192"/>
        <end position="211"/>
    </location>
</feature>
<feature type="topological domain" description="Cytoplasmic" evidence="2">
    <location>
        <begin position="212"/>
        <end position="240"/>
    </location>
</feature>
<feature type="transmembrane region" description="Helical; Name=6" evidence="2">
    <location>
        <begin position="241"/>
        <end position="266"/>
    </location>
</feature>
<feature type="topological domain" description="Extracellular" evidence="2">
    <location>
        <begin position="267"/>
        <end position="279"/>
    </location>
</feature>
<feature type="transmembrane region" description="Helical; Name=7" evidence="2">
    <location>
        <begin position="280"/>
        <end position="300"/>
    </location>
</feature>
<feature type="topological domain" description="Cytoplasmic" evidence="2">
    <location>
        <begin position="301"/>
        <end position="317"/>
    </location>
</feature>
<feature type="glycosylation site" description="N-linked (GlcNAc...) asparagine" evidence="2">
    <location>
        <position position="29"/>
    </location>
</feature>
<evidence type="ECO:0000250" key="1">
    <source>
        <dbReference type="UniProtKB" id="Q01726"/>
    </source>
</evidence>
<evidence type="ECO:0000255" key="2"/>
<evidence type="ECO:0000255" key="3">
    <source>
        <dbReference type="PROSITE-ProRule" id="PRU00521"/>
    </source>
</evidence>
<accession>Q864F6</accession>
<protein>
    <recommendedName>
        <fullName>Melanocyte-stimulating hormone receptor</fullName>
        <shortName>MSH-R</shortName>
    </recommendedName>
    <alternativeName>
        <fullName>Melanocortin receptor 1</fullName>
        <shortName>MC1-R</shortName>
    </alternativeName>
</protein>
<reference key="1">
    <citation type="journal article" date="2003" name="Am. J. Phys. Anthropol.">
        <title>Evolution of a pigmentation gene, the melanocortin-1 receptor, in primates.</title>
        <authorList>
            <person name="Mundy N.I."/>
            <person name="Kelly J."/>
        </authorList>
    </citation>
    <scope>NUCLEOTIDE SEQUENCE [GENOMIC DNA]</scope>
    <source>
        <strain>Isolate 2</strain>
    </source>
</reference>
<comment type="function">
    <text evidence="1">Receptor for MSH (alpha, beta and gamma) and ACTH. The activity of this receptor is mediated by G proteins which activate adenylate cyclase. Mediates melanogenesis, the production of eumelanin (black/brown) and phaeomelanin (red/yellow), via regulation of cAMP signaling in melanocytes.</text>
</comment>
<comment type="subunit">
    <text evidence="1">Interacts with MGRN1, but does not undergo MGRN1-mediated ubiquitination; this interaction competes with GNAS-binding and thus inhibits agonist-induced cAMP production. Interacts with OPN3; the interaction results in a decrease in MC1R-mediated cAMP signaling and ultimately a decrease in melanin production in melanocytes.</text>
</comment>
<comment type="subcellular location">
    <subcellularLocation>
        <location evidence="1">Cell membrane</location>
        <topology evidence="2">Multi-pass membrane protein</topology>
    </subcellularLocation>
</comment>
<comment type="similarity">
    <text evidence="3">Belongs to the G-protein coupled receptor 1 family.</text>
</comment>
<keyword id="KW-1003">Cell membrane</keyword>
<keyword id="KW-0297">G-protein coupled receptor</keyword>
<keyword id="KW-0325">Glycoprotein</keyword>
<keyword id="KW-0472">Membrane</keyword>
<keyword id="KW-0675">Receptor</keyword>
<keyword id="KW-0807">Transducer</keyword>
<keyword id="KW-0812">Transmembrane</keyword>
<keyword id="KW-1133">Transmembrane helix</keyword>
<dbReference type="EMBL" id="AY205141">
    <property type="protein sequence ID" value="AAP31015.1"/>
    <property type="molecule type" value="Genomic_DNA"/>
</dbReference>
<dbReference type="SMR" id="Q864F6"/>
<dbReference type="GlyCosmos" id="Q864F6">
    <property type="glycosylation" value="1 site, No reported glycans"/>
</dbReference>
<dbReference type="GO" id="GO:0005886">
    <property type="term" value="C:plasma membrane"/>
    <property type="evidence" value="ECO:0000250"/>
    <property type="project" value="UniProtKB"/>
</dbReference>
<dbReference type="GO" id="GO:0004980">
    <property type="term" value="F:melanocyte-stimulating hormone receptor activity"/>
    <property type="evidence" value="ECO:0007669"/>
    <property type="project" value="InterPro"/>
</dbReference>
<dbReference type="GO" id="GO:0007189">
    <property type="term" value="P:adenylate cyclase-activating G protein-coupled receptor signaling pathway"/>
    <property type="evidence" value="ECO:0007669"/>
    <property type="project" value="UniProtKB-ARBA"/>
</dbReference>
<dbReference type="FunFam" id="1.20.1070.10:FF:000211">
    <property type="entry name" value="Melanocyte-stimulating hormone receptor"/>
    <property type="match status" value="1"/>
</dbReference>
<dbReference type="Gene3D" id="1.20.1070.10">
    <property type="entry name" value="Rhodopsin 7-helix transmembrane proteins"/>
    <property type="match status" value="1"/>
</dbReference>
<dbReference type="InterPro" id="IPR000276">
    <property type="entry name" value="GPCR_Rhodpsn"/>
</dbReference>
<dbReference type="InterPro" id="IPR017452">
    <property type="entry name" value="GPCR_Rhodpsn_7TM"/>
</dbReference>
<dbReference type="InterPro" id="IPR001671">
    <property type="entry name" value="Melcrt_ACTH_rcpt"/>
</dbReference>
<dbReference type="InterPro" id="IPR000761">
    <property type="entry name" value="MSH_rcpt"/>
</dbReference>
<dbReference type="PANTHER" id="PTHR22750">
    <property type="entry name" value="G-PROTEIN COUPLED RECEPTOR"/>
    <property type="match status" value="1"/>
</dbReference>
<dbReference type="Pfam" id="PF00001">
    <property type="entry name" value="7tm_1"/>
    <property type="match status" value="1"/>
</dbReference>
<dbReference type="PRINTS" id="PR00237">
    <property type="entry name" value="GPCRRHODOPSN"/>
</dbReference>
<dbReference type="PRINTS" id="PR00534">
    <property type="entry name" value="MCRFAMILY"/>
</dbReference>
<dbReference type="PRINTS" id="PR00536">
    <property type="entry name" value="MELNOCYTESHR"/>
</dbReference>
<dbReference type="SMART" id="SM01381">
    <property type="entry name" value="7TM_GPCR_Srsx"/>
    <property type="match status" value="1"/>
</dbReference>
<dbReference type="SUPFAM" id="SSF81321">
    <property type="entry name" value="Family A G protein-coupled receptor-like"/>
    <property type="match status" value="1"/>
</dbReference>
<dbReference type="PROSITE" id="PS00237">
    <property type="entry name" value="G_PROTEIN_RECEP_F1_1"/>
    <property type="match status" value="1"/>
</dbReference>
<dbReference type="PROSITE" id="PS50262">
    <property type="entry name" value="G_PROTEIN_RECEP_F1_2"/>
    <property type="match status" value="1"/>
</dbReference>
<gene>
    <name type="primary">MC1R</name>
</gene>
<sequence>MPAQGSQRGLLGAVNFTPTATPHLRPAANQTGPQCLEVSVPDGLFLCLGLVSLVENTLVVAAIAKNRNLHSPMYCFICCLALSDLLVSVSNLLETAVLLLLEVGALAAQATVVQQLGNVIDVLICSSMVSSLCSLGAIAMDRYISIFYALRYHSIVTLARARRAIAAVWAASILSSTLFITYYDRTAALLCLVVFFLAMLVLMALLYVHMLIQACQHAQAIARLHKRQHPVQQGWGLKGAATLTILLGVFFLCWGPFFLHLTLIAVCPQHPTCSCIFKNFRLFLALIICNTIVDPLIYAFRSQELRRTLKEVLLFSW</sequence>